<gene>
    <name evidence="1" type="primary">trpD</name>
    <name type="ordered locus">Mevan_0332</name>
</gene>
<organism>
    <name type="scientific">Methanococcus vannielii (strain ATCC 35089 / DSM 1224 / JCM 13029 / OCM 148 / SB)</name>
    <dbReference type="NCBI Taxonomy" id="406327"/>
    <lineage>
        <taxon>Archaea</taxon>
        <taxon>Methanobacteriati</taxon>
        <taxon>Methanobacteriota</taxon>
        <taxon>Methanomada group</taxon>
        <taxon>Methanococci</taxon>
        <taxon>Methanococcales</taxon>
        <taxon>Methanococcaceae</taxon>
        <taxon>Methanococcus</taxon>
    </lineage>
</organism>
<proteinExistence type="inferred from homology"/>
<evidence type="ECO:0000255" key="1">
    <source>
        <dbReference type="HAMAP-Rule" id="MF_00211"/>
    </source>
</evidence>
<name>TRPD_METVS</name>
<protein>
    <recommendedName>
        <fullName evidence="1">Anthranilate phosphoribosyltransferase</fullName>
        <ecNumber evidence="1">2.4.2.18</ecNumber>
    </recommendedName>
</protein>
<accession>A6UP19</accession>
<sequence length="321" mass="34735">MLNKLVECENLTFEESYELFNMLLEESEIRIAAYLTALQTKGVTADEIAGFAKAMRDNAVKIDLGEVTDTCGTGGDGSKTINVSTAVSIILACFTKVAKHGNVSVTSKSGSANVYEALGCKILENPDEAKVSIEKTNFAFLFAPKYHPALKKIMPVRSELKIKTVFNILGPLANPANPKYQILGVNSPELSEKVANALSKVGGVKKALVINGNGLDELNPNGASKITEYNGKFETYEITPEDFGLENTKIIPCESPNESARRLIDVFSGKINEDRNFILMNAGAALYASEIVSDFLEGVEIAKNAIDSGKVLKKLEMIKNV</sequence>
<dbReference type="EC" id="2.4.2.18" evidence="1"/>
<dbReference type="EMBL" id="CP000742">
    <property type="protein sequence ID" value="ABR54241.1"/>
    <property type="molecule type" value="Genomic_DNA"/>
</dbReference>
<dbReference type="RefSeq" id="WP_011972144.1">
    <property type="nucleotide sequence ID" value="NC_009634.1"/>
</dbReference>
<dbReference type="SMR" id="A6UP19"/>
<dbReference type="STRING" id="406327.Mevan_0332"/>
<dbReference type="GeneID" id="5325921"/>
<dbReference type="KEGG" id="mvn:Mevan_0332"/>
<dbReference type="eggNOG" id="arCOG02012">
    <property type="taxonomic scope" value="Archaea"/>
</dbReference>
<dbReference type="HOGENOM" id="CLU_034315_3_1_2"/>
<dbReference type="OrthoDB" id="8214at2157"/>
<dbReference type="UniPathway" id="UPA00035">
    <property type="reaction ID" value="UER00041"/>
</dbReference>
<dbReference type="Proteomes" id="UP000001107">
    <property type="component" value="Chromosome"/>
</dbReference>
<dbReference type="GO" id="GO:0005829">
    <property type="term" value="C:cytosol"/>
    <property type="evidence" value="ECO:0007669"/>
    <property type="project" value="TreeGrafter"/>
</dbReference>
<dbReference type="GO" id="GO:0004048">
    <property type="term" value="F:anthranilate phosphoribosyltransferase activity"/>
    <property type="evidence" value="ECO:0007669"/>
    <property type="project" value="UniProtKB-UniRule"/>
</dbReference>
<dbReference type="GO" id="GO:0000287">
    <property type="term" value="F:magnesium ion binding"/>
    <property type="evidence" value="ECO:0007669"/>
    <property type="project" value="UniProtKB-UniRule"/>
</dbReference>
<dbReference type="GO" id="GO:0000162">
    <property type="term" value="P:L-tryptophan biosynthetic process"/>
    <property type="evidence" value="ECO:0007669"/>
    <property type="project" value="UniProtKB-UniRule"/>
</dbReference>
<dbReference type="FunFam" id="3.40.1030.10:FF:000010">
    <property type="entry name" value="Anthranilate phosphoribosyltransferase"/>
    <property type="match status" value="1"/>
</dbReference>
<dbReference type="Gene3D" id="3.40.1030.10">
    <property type="entry name" value="Nucleoside phosphorylase/phosphoribosyltransferase catalytic domain"/>
    <property type="match status" value="1"/>
</dbReference>
<dbReference type="Gene3D" id="1.20.970.10">
    <property type="entry name" value="Transferase, Pyrimidine Nucleoside Phosphorylase, Chain C"/>
    <property type="match status" value="1"/>
</dbReference>
<dbReference type="HAMAP" id="MF_00211">
    <property type="entry name" value="TrpD"/>
    <property type="match status" value="1"/>
</dbReference>
<dbReference type="InterPro" id="IPR005940">
    <property type="entry name" value="Anthranilate_Pribosyl_Tfrase"/>
</dbReference>
<dbReference type="InterPro" id="IPR000312">
    <property type="entry name" value="Glycosyl_Trfase_fam3"/>
</dbReference>
<dbReference type="InterPro" id="IPR017459">
    <property type="entry name" value="Glycosyl_Trfase_fam3_N_dom"/>
</dbReference>
<dbReference type="InterPro" id="IPR036320">
    <property type="entry name" value="Glycosyl_Trfase_fam3_N_dom_sf"/>
</dbReference>
<dbReference type="InterPro" id="IPR035902">
    <property type="entry name" value="Nuc_phospho_transferase"/>
</dbReference>
<dbReference type="NCBIfam" id="TIGR01245">
    <property type="entry name" value="trpD"/>
    <property type="match status" value="1"/>
</dbReference>
<dbReference type="PANTHER" id="PTHR43285">
    <property type="entry name" value="ANTHRANILATE PHOSPHORIBOSYLTRANSFERASE"/>
    <property type="match status" value="1"/>
</dbReference>
<dbReference type="PANTHER" id="PTHR43285:SF2">
    <property type="entry name" value="ANTHRANILATE PHOSPHORIBOSYLTRANSFERASE"/>
    <property type="match status" value="1"/>
</dbReference>
<dbReference type="Pfam" id="PF02885">
    <property type="entry name" value="Glycos_trans_3N"/>
    <property type="match status" value="1"/>
</dbReference>
<dbReference type="Pfam" id="PF00591">
    <property type="entry name" value="Glycos_transf_3"/>
    <property type="match status" value="1"/>
</dbReference>
<dbReference type="SUPFAM" id="SSF52418">
    <property type="entry name" value="Nucleoside phosphorylase/phosphoribosyltransferase catalytic domain"/>
    <property type="match status" value="1"/>
</dbReference>
<dbReference type="SUPFAM" id="SSF47648">
    <property type="entry name" value="Nucleoside phosphorylase/phosphoribosyltransferase N-terminal domain"/>
    <property type="match status" value="1"/>
</dbReference>
<feature type="chain" id="PRO_1000099823" description="Anthranilate phosphoribosyltransferase">
    <location>
        <begin position="1"/>
        <end position="321"/>
    </location>
</feature>
<feature type="binding site" evidence="1">
    <location>
        <position position="72"/>
    </location>
    <ligand>
        <name>5-phospho-alpha-D-ribose 1-diphosphate</name>
        <dbReference type="ChEBI" id="CHEBI:58017"/>
    </ligand>
</feature>
<feature type="binding site" evidence="1">
    <location>
        <position position="72"/>
    </location>
    <ligand>
        <name>anthranilate</name>
        <dbReference type="ChEBI" id="CHEBI:16567"/>
        <label>1</label>
    </ligand>
</feature>
<feature type="binding site" evidence="1">
    <location>
        <begin position="75"/>
        <end position="76"/>
    </location>
    <ligand>
        <name>5-phospho-alpha-D-ribose 1-diphosphate</name>
        <dbReference type="ChEBI" id="CHEBI:58017"/>
    </ligand>
</feature>
<feature type="binding site" evidence="1">
    <location>
        <position position="80"/>
    </location>
    <ligand>
        <name>5-phospho-alpha-D-ribose 1-diphosphate</name>
        <dbReference type="ChEBI" id="CHEBI:58017"/>
    </ligand>
</feature>
<feature type="binding site" evidence="1">
    <location>
        <begin position="82"/>
        <end position="85"/>
    </location>
    <ligand>
        <name>5-phospho-alpha-D-ribose 1-diphosphate</name>
        <dbReference type="ChEBI" id="CHEBI:58017"/>
    </ligand>
</feature>
<feature type="binding site" evidence="1">
    <location>
        <position position="84"/>
    </location>
    <ligand>
        <name>Mg(2+)</name>
        <dbReference type="ChEBI" id="CHEBI:18420"/>
        <label>1</label>
    </ligand>
</feature>
<feature type="binding site" evidence="1">
    <location>
        <begin position="99"/>
        <end position="107"/>
    </location>
    <ligand>
        <name>5-phospho-alpha-D-ribose 1-diphosphate</name>
        <dbReference type="ChEBI" id="CHEBI:58017"/>
    </ligand>
</feature>
<feature type="binding site" evidence="1">
    <location>
        <position position="102"/>
    </location>
    <ligand>
        <name>anthranilate</name>
        <dbReference type="ChEBI" id="CHEBI:16567"/>
        <label>1</label>
    </ligand>
</feature>
<feature type="binding site" evidence="1">
    <location>
        <position position="111"/>
    </location>
    <ligand>
        <name>5-phospho-alpha-D-ribose 1-diphosphate</name>
        <dbReference type="ChEBI" id="CHEBI:58017"/>
    </ligand>
</feature>
<feature type="binding site" evidence="1">
    <location>
        <position position="157"/>
    </location>
    <ligand>
        <name>anthranilate</name>
        <dbReference type="ChEBI" id="CHEBI:16567"/>
        <label>2</label>
    </ligand>
</feature>
<feature type="binding site" evidence="1">
    <location>
        <position position="216"/>
    </location>
    <ligand>
        <name>Mg(2+)</name>
        <dbReference type="ChEBI" id="CHEBI:18420"/>
        <label>2</label>
    </ligand>
</feature>
<feature type="binding site" evidence="1">
    <location>
        <position position="217"/>
    </location>
    <ligand>
        <name>Mg(2+)</name>
        <dbReference type="ChEBI" id="CHEBI:18420"/>
        <label>1</label>
    </ligand>
</feature>
<feature type="binding site" evidence="1">
    <location>
        <position position="217"/>
    </location>
    <ligand>
        <name>Mg(2+)</name>
        <dbReference type="ChEBI" id="CHEBI:18420"/>
        <label>2</label>
    </ligand>
</feature>
<reference key="1">
    <citation type="submission" date="2007-06" db="EMBL/GenBank/DDBJ databases">
        <title>Complete sequence of Methanococcus vannielii SB.</title>
        <authorList>
            <consortium name="US DOE Joint Genome Institute"/>
            <person name="Copeland A."/>
            <person name="Lucas S."/>
            <person name="Lapidus A."/>
            <person name="Barry K."/>
            <person name="Glavina del Rio T."/>
            <person name="Dalin E."/>
            <person name="Tice H."/>
            <person name="Pitluck S."/>
            <person name="Chain P."/>
            <person name="Malfatti S."/>
            <person name="Shin M."/>
            <person name="Vergez L."/>
            <person name="Schmutz J."/>
            <person name="Larimer F."/>
            <person name="Land M."/>
            <person name="Hauser L."/>
            <person name="Kyrpides N."/>
            <person name="Anderson I."/>
            <person name="Sieprawska-Lupa M."/>
            <person name="Whitman W.B."/>
            <person name="Richardson P."/>
        </authorList>
    </citation>
    <scope>NUCLEOTIDE SEQUENCE [LARGE SCALE GENOMIC DNA]</scope>
    <source>
        <strain>ATCC 35089 / DSM 1224 / JCM 13029 / OCM 148 / SB</strain>
    </source>
</reference>
<comment type="function">
    <text evidence="1">Catalyzes the transfer of the phosphoribosyl group of 5-phosphorylribose-1-pyrophosphate (PRPP) to anthranilate to yield N-(5'-phosphoribosyl)-anthranilate (PRA).</text>
</comment>
<comment type="catalytic activity">
    <reaction evidence="1">
        <text>N-(5-phospho-beta-D-ribosyl)anthranilate + diphosphate = 5-phospho-alpha-D-ribose 1-diphosphate + anthranilate</text>
        <dbReference type="Rhea" id="RHEA:11768"/>
        <dbReference type="ChEBI" id="CHEBI:16567"/>
        <dbReference type="ChEBI" id="CHEBI:18277"/>
        <dbReference type="ChEBI" id="CHEBI:33019"/>
        <dbReference type="ChEBI" id="CHEBI:58017"/>
        <dbReference type="EC" id="2.4.2.18"/>
    </reaction>
</comment>
<comment type="cofactor">
    <cofactor evidence="1">
        <name>Mg(2+)</name>
        <dbReference type="ChEBI" id="CHEBI:18420"/>
    </cofactor>
    <text evidence="1">Binds 2 magnesium ions per monomer.</text>
</comment>
<comment type="pathway">
    <text evidence="1">Amino-acid biosynthesis; L-tryptophan biosynthesis; L-tryptophan from chorismate: step 2/5.</text>
</comment>
<comment type="subunit">
    <text evidence="1">Homodimer.</text>
</comment>
<comment type="similarity">
    <text evidence="1">Belongs to the anthranilate phosphoribosyltransferase family.</text>
</comment>
<keyword id="KW-0028">Amino-acid biosynthesis</keyword>
<keyword id="KW-0057">Aromatic amino acid biosynthesis</keyword>
<keyword id="KW-0328">Glycosyltransferase</keyword>
<keyword id="KW-0460">Magnesium</keyword>
<keyword id="KW-0479">Metal-binding</keyword>
<keyword id="KW-0808">Transferase</keyword>
<keyword id="KW-0822">Tryptophan biosynthesis</keyword>